<gene>
    <name evidence="8" type="primary">ALY4</name>
    <name evidence="7" type="synonym">DIP2</name>
    <name type="synonym">THO4D</name>
    <name type="ordered locus">At5g37720</name>
    <name type="ORF">K12B20.19</name>
</gene>
<organism>
    <name type="scientific">Arabidopsis thaliana</name>
    <name type="common">Mouse-ear cress</name>
    <dbReference type="NCBI Taxonomy" id="3702"/>
    <lineage>
        <taxon>Eukaryota</taxon>
        <taxon>Viridiplantae</taxon>
        <taxon>Streptophyta</taxon>
        <taxon>Embryophyta</taxon>
        <taxon>Tracheophyta</taxon>
        <taxon>Spermatophyta</taxon>
        <taxon>Magnoliopsida</taxon>
        <taxon>eudicotyledons</taxon>
        <taxon>Gunneridae</taxon>
        <taxon>Pentapetalae</taxon>
        <taxon>rosids</taxon>
        <taxon>malvids</taxon>
        <taxon>Brassicales</taxon>
        <taxon>Brassicaceae</taxon>
        <taxon>Camelineae</taxon>
        <taxon>Arabidopsis</taxon>
    </lineage>
</organism>
<comment type="function">
    <text evidence="3 6">Export adapter involved in nuclear export of spliced and unspliced mRNA (PubMed:11432957). Plays a role in disease resistance. Mediates multiple defense responses triggered by NEP1, including stomatal closure, hypersensitive cell death (HCD) and defense-related gene expression (PubMed:24723400).</text>
</comment>
<comment type="subunit">
    <text evidence="3 5">Interacts with PARP1 (PubMed:11432957). Interacts with EIF4A3 (PubMed:19435936).</text>
</comment>
<comment type="subcellular location">
    <subcellularLocation>
        <location evidence="3 4">Nucleus</location>
        <location evidence="3 4">Nucleoplasm</location>
    </subcellularLocation>
    <subcellularLocation>
        <location evidence="4">Nucleus</location>
        <location evidence="4">Nucleolus</location>
    </subcellularLocation>
</comment>
<comment type="alternative products">
    <event type="alternative splicing"/>
    <isoform>
        <id>Q6NQ72-1</id>
        <name>1</name>
        <sequence type="displayed"/>
    </isoform>
    <text>A number of isoforms are produced. According to EST sequences.</text>
</comment>
<comment type="similarity">
    <text evidence="9">Belongs to the ALYREF family.</text>
</comment>
<comment type="sequence caution" evidence="9">
    <conflict type="erroneous gene model prediction">
        <sequence resource="EMBL-CDS" id="BAB08317"/>
    </conflict>
</comment>
<keyword id="KW-0007">Acetylation</keyword>
<keyword id="KW-0025">Alternative splicing</keyword>
<keyword id="KW-0509">mRNA transport</keyword>
<keyword id="KW-0539">Nucleus</keyword>
<keyword id="KW-0611">Plant defense</keyword>
<keyword id="KW-1185">Reference proteome</keyword>
<keyword id="KW-0694">RNA-binding</keyword>
<keyword id="KW-0813">Transport</keyword>
<proteinExistence type="evidence at protein level"/>
<sequence>MSGALNMTLDEIVKRGKTARSGGRGISRGRGRGRGGGGRGAGPARRGPLAVNARPSSFTINKPVRRVRSLPWQSGLFEDGLRAAGASGVEVGTRLHVTNLDQGVTNEDIRELFSEIGEVERYAIHYDKNGRPSGTAEVVYPRRSDAFQALKKYNNVLLDGRPMRLEILGGNNSSEAPLSGRVNVNVTGLNGRLKRTVVIQQGGGGRGRVRGGRGGRGPAPTVSRRLPIHNQQGGGMRGGRGGFRARGRGNGGRGRGGGRGNGKKPVEKSAADLDKDLESYHADAMNTS</sequence>
<evidence type="ECO:0000255" key="1">
    <source>
        <dbReference type="PROSITE-ProRule" id="PRU00176"/>
    </source>
</evidence>
<evidence type="ECO:0000256" key="2">
    <source>
        <dbReference type="SAM" id="MobiDB-lite"/>
    </source>
</evidence>
<evidence type="ECO:0000269" key="3">
    <source>
    </source>
</evidence>
<evidence type="ECO:0000269" key="4">
    <source>
    </source>
</evidence>
<evidence type="ECO:0000269" key="5">
    <source>
    </source>
</evidence>
<evidence type="ECO:0000269" key="6">
    <source>
    </source>
</evidence>
<evidence type="ECO:0000303" key="7">
    <source>
    </source>
</evidence>
<evidence type="ECO:0000303" key="8">
    <source>
    </source>
</evidence>
<evidence type="ECO:0000305" key="9"/>
<evidence type="ECO:0007744" key="10">
    <source>
    </source>
</evidence>
<reference key="1">
    <citation type="journal article" date="2001" name="J. Exp. Bot.">
        <title>Arabidopsis coactivator ALY-like proteins, DIP1 and DIP2, interact physically with the DNA-binding domain of the Zn-finger poly(ADP-ribose) polymerase.</title>
        <authorList>
            <person name="Storozhenko S."/>
            <person name="Inze D."/>
            <person name="Van Montagu M."/>
            <person name="Kushnir S."/>
        </authorList>
    </citation>
    <scope>NUCLEOTIDE SEQUENCE [MRNA]</scope>
    <scope>FUNCTION</scope>
    <scope>SUBCELLULAR LOCATION</scope>
    <scope>INTERACTION WITH PARP1</scope>
</reference>
<reference key="2">
    <citation type="journal article" date="1999" name="DNA Res.">
        <title>Structural analysis of Arabidopsis thaliana chromosome 5. IX. Sequence features of the regions of 1,011,550 bp covered by seventeen P1 and TAC clones.</title>
        <authorList>
            <person name="Kaneko T."/>
            <person name="Katoh T."/>
            <person name="Sato S."/>
            <person name="Nakamura Y."/>
            <person name="Asamizu E."/>
            <person name="Kotani H."/>
            <person name="Miyajima N."/>
            <person name="Tabata S."/>
        </authorList>
    </citation>
    <scope>NUCLEOTIDE SEQUENCE [LARGE SCALE GENOMIC DNA]</scope>
    <source>
        <strain>cv. Columbia</strain>
    </source>
</reference>
<reference key="3">
    <citation type="journal article" date="2017" name="Plant J.">
        <title>Araport11: a complete reannotation of the Arabidopsis thaliana reference genome.</title>
        <authorList>
            <person name="Cheng C.Y."/>
            <person name="Krishnakumar V."/>
            <person name="Chan A.P."/>
            <person name="Thibaud-Nissen F."/>
            <person name="Schobel S."/>
            <person name="Town C.D."/>
        </authorList>
    </citation>
    <scope>GENOME REANNOTATION</scope>
    <source>
        <strain>cv. Columbia</strain>
    </source>
</reference>
<reference key="4">
    <citation type="submission" date="2003-10" db="EMBL/GenBank/DDBJ databases">
        <title>Arabidopsis ORF clones.</title>
        <authorList>
            <person name="Cheuk R.F."/>
            <person name="Chen H."/>
            <person name="Kim C.J."/>
            <person name="Shinn P."/>
            <person name="Carninci P."/>
            <person name="Hayashizaki Y."/>
            <person name="Ishida J."/>
            <person name="Kamiya A."/>
            <person name="Kawai J."/>
            <person name="Narusaka M."/>
            <person name="Sakurai T."/>
            <person name="Satou M."/>
            <person name="Seki M."/>
            <person name="Shinozaki K."/>
            <person name="Ecker J.R."/>
        </authorList>
    </citation>
    <scope>NUCLEOTIDE SEQUENCE [LARGE SCALE MRNA]</scope>
    <source>
        <strain>cv. Columbia</strain>
    </source>
</reference>
<reference key="5">
    <citation type="submission" date="2006-07" db="EMBL/GenBank/DDBJ databases">
        <title>Large-scale analysis of RIKEN Arabidopsis full-length (RAFL) cDNAs.</title>
        <authorList>
            <person name="Totoki Y."/>
            <person name="Seki M."/>
            <person name="Ishida J."/>
            <person name="Nakajima M."/>
            <person name="Enju A."/>
            <person name="Kamiya A."/>
            <person name="Narusaka M."/>
            <person name="Shin-i T."/>
            <person name="Nakagawa M."/>
            <person name="Sakamoto N."/>
            <person name="Oishi K."/>
            <person name="Kohara Y."/>
            <person name="Kobayashi M."/>
            <person name="Toyoda A."/>
            <person name="Sakaki Y."/>
            <person name="Sakurai T."/>
            <person name="Iida K."/>
            <person name="Akiyama K."/>
            <person name="Satou M."/>
            <person name="Toyoda T."/>
            <person name="Konagaya A."/>
            <person name="Carninci P."/>
            <person name="Kawai J."/>
            <person name="Hayashizaki Y."/>
            <person name="Shinozaki K."/>
        </authorList>
    </citation>
    <scope>NUCLEOTIDE SEQUENCE [LARGE SCALE MRNA]</scope>
    <source>
        <strain>cv. Columbia</strain>
    </source>
</reference>
<reference key="6">
    <citation type="journal article" date="2004" name="Plant Physiol.">
        <title>Relocalization of nuclear ALY proteins to the cytoplasm by the tomato bushy stunt virus P19 pathogenicity protein.</title>
        <authorList>
            <person name="Uhrig J.F."/>
            <person name="Canto T."/>
            <person name="Marshall D."/>
            <person name="MacFarlane S.A."/>
        </authorList>
    </citation>
    <scope>SUBCELLULAR LOCATION</scope>
</reference>
<reference key="7">
    <citation type="journal article" date="2009" name="Plant Cell">
        <title>Dynamic behavior of Arabidopsis eIF4A-III, putative core protein of exon junction complex: fast relocation to nucleolus and splicing speckles under hypoxia.</title>
        <authorList>
            <person name="Koroleva O.A."/>
            <person name="Calder G."/>
            <person name="Pendle A.F."/>
            <person name="Kim S.H."/>
            <person name="Lewandowska D."/>
            <person name="Simpson C.G."/>
            <person name="Jones I.M."/>
            <person name="Brown J.W.S."/>
            <person name="Shaw P.J."/>
        </authorList>
    </citation>
    <scope>INTERACTION WITH EIF4A3</scope>
</reference>
<reference key="8">
    <citation type="journal article" date="2012" name="Mol. Cell. Proteomics">
        <title>Comparative large-scale characterisation of plant vs. mammal proteins reveals similar and idiosyncratic N-alpha acetylation features.</title>
        <authorList>
            <person name="Bienvenut W.V."/>
            <person name="Sumpton D."/>
            <person name="Martinez A."/>
            <person name="Lilla S."/>
            <person name="Espagne C."/>
            <person name="Meinnel T."/>
            <person name="Giglione C."/>
        </authorList>
    </citation>
    <scope>ACETYLATION [LARGE SCALE ANALYSIS] AT SER-2</scope>
    <scope>CLEAVAGE OF INITIATOR METHIONINE [LARGE SCALE ANALYSIS]</scope>
    <scope>IDENTIFICATION BY MASS SPECTROMETRY [LARGE SCALE ANALYSIS]</scope>
</reference>
<reference key="9">
    <citation type="journal article" date="2014" name="J. Exp. Bot.">
        <title>ALY proteins participate in multifaceted Nep1Mo-triggered responses in Nicotiana benthamiana and Arabidopsis thaliana.</title>
        <authorList>
            <person name="Teng W."/>
            <person name="Zhang H."/>
            <person name="Wang W."/>
            <person name="Li D."/>
            <person name="Wang M."/>
            <person name="Liu J."/>
            <person name="Zhang H."/>
            <person name="Zheng X."/>
            <person name="Zhang Z."/>
        </authorList>
    </citation>
    <scope>FUNCTION</scope>
</reference>
<protein>
    <recommendedName>
        <fullName>THO complex subunit 4D</fullName>
    </recommendedName>
    <alternativeName>
        <fullName evidence="8">ALYREF homolog 4</fullName>
        <shortName evidence="8">AtALY4</shortName>
    </alternativeName>
</protein>
<dbReference type="EMBL" id="AJ278493">
    <property type="protein sequence ID" value="CAC01084.1"/>
    <property type="molecule type" value="mRNA"/>
</dbReference>
<dbReference type="EMBL" id="AB018107">
    <property type="protein sequence ID" value="BAB08317.1"/>
    <property type="status" value="ALT_SEQ"/>
    <property type="molecule type" value="Genomic_DNA"/>
</dbReference>
<dbReference type="EMBL" id="CP002688">
    <property type="protein sequence ID" value="AED94222.1"/>
    <property type="molecule type" value="Genomic_DNA"/>
</dbReference>
<dbReference type="EMBL" id="BT010588">
    <property type="protein sequence ID" value="AAQ89610.1"/>
    <property type="molecule type" value="mRNA"/>
</dbReference>
<dbReference type="EMBL" id="AK227931">
    <property type="protein sequence ID" value="BAE99901.1"/>
    <property type="molecule type" value="mRNA"/>
</dbReference>
<dbReference type="RefSeq" id="NP_198588.2">
    <molecule id="Q6NQ72-1"/>
    <property type="nucleotide sequence ID" value="NM_123131.4"/>
</dbReference>
<dbReference type="SMR" id="Q6NQ72"/>
<dbReference type="BioGRID" id="19001">
    <property type="interactions" value="8"/>
</dbReference>
<dbReference type="FunCoup" id="Q6NQ72">
    <property type="interactions" value="3842"/>
</dbReference>
<dbReference type="IntAct" id="Q6NQ72">
    <property type="interactions" value="1"/>
</dbReference>
<dbReference type="STRING" id="3702.Q6NQ72"/>
<dbReference type="GlyGen" id="Q6NQ72">
    <property type="glycosylation" value="1 site"/>
</dbReference>
<dbReference type="iPTMnet" id="Q6NQ72"/>
<dbReference type="PaxDb" id="3702-AT5G37720.1"/>
<dbReference type="ProteomicsDB" id="246458">
    <molecule id="Q6NQ72-1"/>
</dbReference>
<dbReference type="EnsemblPlants" id="AT5G37720.1">
    <molecule id="Q6NQ72-1"/>
    <property type="protein sequence ID" value="AT5G37720.1"/>
    <property type="gene ID" value="AT5G37720"/>
</dbReference>
<dbReference type="GeneID" id="833750"/>
<dbReference type="Gramene" id="AT5G37720.1">
    <molecule id="Q6NQ72-1"/>
    <property type="protein sequence ID" value="AT5G37720.1"/>
    <property type="gene ID" value="AT5G37720"/>
</dbReference>
<dbReference type="KEGG" id="ath:AT5G37720"/>
<dbReference type="Araport" id="AT5G37720"/>
<dbReference type="TAIR" id="AT5G37720">
    <property type="gene designation" value="ALY4"/>
</dbReference>
<dbReference type="eggNOG" id="KOG0533">
    <property type="taxonomic scope" value="Eukaryota"/>
</dbReference>
<dbReference type="InParanoid" id="Q6NQ72"/>
<dbReference type="OMA" id="NMAGRVD"/>
<dbReference type="PhylomeDB" id="Q6NQ72"/>
<dbReference type="CD-CODE" id="4299E36E">
    <property type="entry name" value="Nucleolus"/>
</dbReference>
<dbReference type="PRO" id="PR:Q6NQ72"/>
<dbReference type="Proteomes" id="UP000006548">
    <property type="component" value="Chromosome 5"/>
</dbReference>
<dbReference type="ExpressionAtlas" id="Q6NQ72">
    <property type="expression patterns" value="baseline and differential"/>
</dbReference>
<dbReference type="GO" id="GO:0005730">
    <property type="term" value="C:nucleolus"/>
    <property type="evidence" value="ECO:0000314"/>
    <property type="project" value="UniProtKB"/>
</dbReference>
<dbReference type="GO" id="GO:0005654">
    <property type="term" value="C:nucleoplasm"/>
    <property type="evidence" value="ECO:0000314"/>
    <property type="project" value="UniProtKB"/>
</dbReference>
<dbReference type="GO" id="GO:0003729">
    <property type="term" value="F:mRNA binding"/>
    <property type="evidence" value="ECO:0000314"/>
    <property type="project" value="TAIR"/>
</dbReference>
<dbReference type="GO" id="GO:0006952">
    <property type="term" value="P:defense response"/>
    <property type="evidence" value="ECO:0007669"/>
    <property type="project" value="UniProtKB-KW"/>
</dbReference>
<dbReference type="GO" id="GO:0051028">
    <property type="term" value="P:mRNA transport"/>
    <property type="evidence" value="ECO:0007669"/>
    <property type="project" value="UniProtKB-KW"/>
</dbReference>
<dbReference type="CDD" id="cd12680">
    <property type="entry name" value="RRM_THOC4"/>
    <property type="match status" value="1"/>
</dbReference>
<dbReference type="FunFam" id="3.30.70.330:FF:001093">
    <property type="entry name" value="THO complex subunit 4D"/>
    <property type="match status" value="1"/>
</dbReference>
<dbReference type="Gene3D" id="3.30.70.330">
    <property type="match status" value="1"/>
</dbReference>
<dbReference type="InterPro" id="IPR051229">
    <property type="entry name" value="ALYREF_mRNA_export"/>
</dbReference>
<dbReference type="InterPro" id="IPR025715">
    <property type="entry name" value="FoP_C"/>
</dbReference>
<dbReference type="InterPro" id="IPR012677">
    <property type="entry name" value="Nucleotide-bd_a/b_plait_sf"/>
</dbReference>
<dbReference type="InterPro" id="IPR035979">
    <property type="entry name" value="RBD_domain_sf"/>
</dbReference>
<dbReference type="InterPro" id="IPR000504">
    <property type="entry name" value="RRM_dom"/>
</dbReference>
<dbReference type="PANTHER" id="PTHR19965">
    <property type="entry name" value="RNA AND EXPORT FACTOR BINDING PROTEIN"/>
    <property type="match status" value="1"/>
</dbReference>
<dbReference type="PANTHER" id="PTHR19965:SF33">
    <property type="entry name" value="THO COMPLEX SUBUNIT 4D"/>
    <property type="match status" value="1"/>
</dbReference>
<dbReference type="Pfam" id="PF13865">
    <property type="entry name" value="FoP_duplication"/>
    <property type="match status" value="1"/>
</dbReference>
<dbReference type="Pfam" id="PF00076">
    <property type="entry name" value="RRM_1"/>
    <property type="match status" value="1"/>
</dbReference>
<dbReference type="SMART" id="SM01218">
    <property type="entry name" value="FoP_duplication"/>
    <property type="match status" value="1"/>
</dbReference>
<dbReference type="SMART" id="SM00360">
    <property type="entry name" value="RRM"/>
    <property type="match status" value="1"/>
</dbReference>
<dbReference type="SUPFAM" id="SSF54928">
    <property type="entry name" value="RNA-binding domain, RBD"/>
    <property type="match status" value="1"/>
</dbReference>
<dbReference type="PROSITE" id="PS50102">
    <property type="entry name" value="RRM"/>
    <property type="match status" value="1"/>
</dbReference>
<accession>Q6NQ72</accession>
<accession>Q9FHP9</accession>
<accession>Q9LF76</accession>
<name>THO4D_ARATH</name>
<feature type="initiator methionine" description="Removed" evidence="10">
    <location>
        <position position="1"/>
    </location>
</feature>
<feature type="chain" id="PRO_0000425588" description="THO complex subunit 4D">
    <location>
        <begin position="2"/>
        <end position="288"/>
    </location>
</feature>
<feature type="domain" description="RRM" evidence="1">
    <location>
        <begin position="93"/>
        <end position="170"/>
    </location>
</feature>
<feature type="region of interest" description="Disordered" evidence="2">
    <location>
        <begin position="1"/>
        <end position="55"/>
    </location>
</feature>
<feature type="region of interest" description="Disordered" evidence="2">
    <location>
        <begin position="201"/>
        <end position="288"/>
    </location>
</feature>
<feature type="compositionally biased region" description="Gly residues" evidence="2">
    <location>
        <begin position="232"/>
        <end position="260"/>
    </location>
</feature>
<feature type="compositionally biased region" description="Basic and acidic residues" evidence="2">
    <location>
        <begin position="264"/>
        <end position="281"/>
    </location>
</feature>
<feature type="modified residue" description="N-acetylserine" evidence="10">
    <location>
        <position position="2"/>
    </location>
</feature>
<feature type="sequence conflict" description="In Ref. 1; CAC01084." evidence="9" ref="1">
    <original>R</original>
    <variation>I</variation>
    <location>
        <position position="206"/>
    </location>
</feature>
<feature type="sequence conflict" description="In Ref. 1; CAC01084." evidence="9" ref="1">
    <original>G</original>
    <variation>E</variation>
    <location>
        <position position="215"/>
    </location>
</feature>
<feature type="sequence conflict" description="In Ref. 1; CAC01084." evidence="9" ref="1">
    <original>R</original>
    <variation>L</variation>
    <location>
        <position position="224"/>
    </location>
</feature>
<feature type="sequence conflict" description="In Ref. 1; CAC01084." evidence="9" ref="1">
    <original>G</original>
    <variation>D</variation>
    <location>
        <position position="252"/>
    </location>
</feature>
<feature type="sequence conflict" description="In Ref. 1; CAC01084." evidence="9" ref="1">
    <original>K</original>
    <variation>N</variation>
    <location>
        <position position="263"/>
    </location>
</feature>
<feature type="sequence conflict" description="In Ref. 1; CAC01084." evidence="9" ref="1">
    <original>D</original>
    <variation>A</variation>
    <location>
        <position position="274"/>
    </location>
</feature>